<keyword id="KW-0150">Chloroplast</keyword>
<keyword id="KW-0472">Membrane</keyword>
<keyword id="KW-0934">Plastid</keyword>
<keyword id="KW-1001">Plastid inner membrane</keyword>
<keyword id="KW-0653">Protein transport</keyword>
<keyword id="KW-1185">Reference proteome</keyword>
<keyword id="KW-0812">Transmembrane</keyword>
<keyword id="KW-1133">Transmembrane helix</keyword>
<keyword id="KW-0813">Transport</keyword>
<name>TI214_SOLLC</name>
<dbReference type="EMBL" id="DQ347959">
    <property type="protein sequence ID" value="ABC56359.1"/>
    <property type="molecule type" value="Genomic_DNA"/>
</dbReference>
<dbReference type="EMBL" id="AM087200">
    <property type="protein sequence ID" value="CAJ32453.1"/>
    <property type="molecule type" value="Genomic_DNA"/>
</dbReference>
<dbReference type="EMBL" id="AM087200">
    <property type="protein sequence ID" value="CAJ32441.1"/>
    <property type="molecule type" value="Genomic_DNA"/>
</dbReference>
<dbReference type="RefSeq" id="AP_004975.1">
    <property type="nucleotide sequence ID" value="AC_000188.1"/>
</dbReference>
<dbReference type="RefSeq" id="AP_004987.1">
    <property type="nucleotide sequence ID" value="AC_000188.1"/>
</dbReference>
<dbReference type="STRING" id="4081.Q2MI42"/>
<dbReference type="PaxDb" id="4081-Solyc11g021310.1.1"/>
<dbReference type="KEGG" id="sly:3950474"/>
<dbReference type="eggNOG" id="ENOG502QSDY">
    <property type="taxonomic scope" value="Eukaryota"/>
</dbReference>
<dbReference type="InParanoid" id="Q2MI42"/>
<dbReference type="OrthoDB" id="1938219at2759"/>
<dbReference type="Proteomes" id="UP000004994">
    <property type="component" value="Chloroplast"/>
</dbReference>
<dbReference type="ExpressionAtlas" id="Q2MI42">
    <property type="expression patterns" value="baseline and differential"/>
</dbReference>
<dbReference type="GO" id="GO:0009706">
    <property type="term" value="C:chloroplast inner membrane"/>
    <property type="evidence" value="ECO:0007669"/>
    <property type="project" value="UniProtKB-SubCell"/>
</dbReference>
<dbReference type="GO" id="GO:0015031">
    <property type="term" value="P:protein transport"/>
    <property type="evidence" value="ECO:0007669"/>
    <property type="project" value="UniProtKB-KW"/>
</dbReference>
<dbReference type="InterPro" id="IPR008896">
    <property type="entry name" value="TIC214"/>
</dbReference>
<dbReference type="PANTHER" id="PTHR33163">
    <property type="entry name" value="PROTEIN TIC 214-RELATED"/>
    <property type="match status" value="1"/>
</dbReference>
<dbReference type="PANTHER" id="PTHR33163:SF47">
    <property type="entry name" value="TRANSLOCON AT THE INNER ENVELOPE MEMBRANE OF CHLOROPLASTS 214"/>
    <property type="match status" value="1"/>
</dbReference>
<dbReference type="Pfam" id="PF05758">
    <property type="entry name" value="Ycf1"/>
    <property type="match status" value="1"/>
</dbReference>
<evidence type="ECO:0000250" key="1">
    <source>
        <dbReference type="UniProtKB" id="P56785"/>
    </source>
</evidence>
<evidence type="ECO:0000255" key="2"/>
<evidence type="ECO:0000256" key="3">
    <source>
        <dbReference type="SAM" id="MobiDB-lite"/>
    </source>
</evidence>
<evidence type="ECO:0000305" key="4"/>
<protein>
    <recommendedName>
        <fullName evidence="1">Protein TIC 214</fullName>
    </recommendedName>
    <alternativeName>
        <fullName evidence="1">Translocon at the inner envelope membrane of chloroplasts 214</fullName>
        <shortName evidence="1">AtTIC214</shortName>
    </alternativeName>
</protein>
<comment type="function">
    <text evidence="1">Involved in protein precursor import into chloroplasts. May be part of an intermediate translocation complex acting as a protein-conducting channel at the inner envelope.</text>
</comment>
<comment type="subunit">
    <text evidence="1">Part of the Tic complex.</text>
</comment>
<comment type="subcellular location">
    <subcellularLocation>
        <location evidence="1">Plastid</location>
        <location evidence="1">Chloroplast inner membrane</location>
        <topology evidence="2">Multi-pass membrane protein</topology>
    </subcellularLocation>
</comment>
<comment type="miscellaneous">
    <text>There is a partial copy of the N-terminus (positions 1-379) of ycf1 in the inverted repeat (CAJ32441).</text>
</comment>
<comment type="similarity">
    <text evidence="4">Belongs to the TIC214 family.</text>
</comment>
<accession>Q2MI42</accession>
<accession>Q2A7B0</accession>
<accession>Q2A7C2</accession>
<organism>
    <name type="scientific">Solanum lycopersicum</name>
    <name type="common">Tomato</name>
    <name type="synonym">Lycopersicon esculentum</name>
    <dbReference type="NCBI Taxonomy" id="4081"/>
    <lineage>
        <taxon>Eukaryota</taxon>
        <taxon>Viridiplantae</taxon>
        <taxon>Streptophyta</taxon>
        <taxon>Embryophyta</taxon>
        <taxon>Tracheophyta</taxon>
        <taxon>Spermatophyta</taxon>
        <taxon>Magnoliopsida</taxon>
        <taxon>eudicotyledons</taxon>
        <taxon>Gunneridae</taxon>
        <taxon>Pentapetalae</taxon>
        <taxon>asterids</taxon>
        <taxon>lamiids</taxon>
        <taxon>Solanales</taxon>
        <taxon>Solanaceae</taxon>
        <taxon>Solanoideae</taxon>
        <taxon>Solaneae</taxon>
        <taxon>Solanum</taxon>
        <taxon>Solanum subgen. Lycopersicon</taxon>
    </lineage>
</organism>
<gene>
    <name evidence="1" type="primary">TIC214</name>
    <name type="synonym">ycf1-A</name>
</gene>
<gene>
    <name evidence="1" type="primary">TIC214</name>
    <name type="synonym">ycf1-B</name>
</gene>
<reference key="1">
    <citation type="journal article" date="2006" name="Theor. Appl. Genet.">
        <title>Complete chloroplast genome sequences of Solanum bulbocastanum, Solanum lycopersicum and comparative analyses with other Solanaceae genomes.</title>
        <authorList>
            <person name="Daniell H."/>
            <person name="Lee S.-B."/>
            <person name="Grevich J."/>
            <person name="Saski C."/>
            <person name="Quesada-Vargas T."/>
            <person name="Guda C."/>
            <person name="Tomkins J."/>
            <person name="Jansen R.K."/>
        </authorList>
    </citation>
    <scope>NUCLEOTIDE SEQUENCE [LARGE SCALE GENOMIC DNA]</scope>
    <source>
        <strain>cv. LA3023</strain>
    </source>
</reference>
<reference key="2">
    <citation type="journal article" date="2006" name="J. Mol. Evol.">
        <title>Sequence of the tomato chloroplast DNA and evolutionary comparison of solanaceous plastid genomes.</title>
        <authorList>
            <person name="Kahlau S."/>
            <person name="Aspinall S."/>
            <person name="Gray J.C."/>
            <person name="Bock R."/>
        </authorList>
    </citation>
    <scope>NUCLEOTIDE SEQUENCE [LARGE SCALE GENOMIC DNA]</scope>
    <source>
        <strain>cv. IPA-6</strain>
    </source>
</reference>
<sequence length="1891" mass="225281">MIFQSFLLGNLVSLCMKIINSVVVVGLYYGFLTTFSIGPSYLFLLRALVMEEGTEKKVSATTGFITGQLMMFISIYYAPLHLALGRPHTITVLALPYLLFHFFWNNHKHFFDYGSTTRNSMRNLSIQCVFLNNLIFQLFNHFILPSSMLARLVNIYLFRCNNKILFVTSGFVGWLIGHILFMKWLGLVLVWIRQNHSIRSNKYIRSNKYLVLELRNSMARIFSILLFITCVYYLGRIPSPILTKKLKEASKTEERVESEEERDVEIETASEMKGTKQEQEGSTEEDPYPSPSLFSEEGWDPDKIDETEEIRVNGKDKIKDKFHSHLTETGYNNINTSNSPIYDYQDSYLNNNNTGNLENCKLQLLDKKNENQEQDLFWFQKPLVSLLFDYNRWNRPFRYIKNNRFEQAVRTEMSQYFFDTCKSDGKQKISFTYPPSLSTFWKMIKRKIPLLSLQKTLPNELDTQWVSTNKEKSNNLNKEFLNRLEILDKESLSLDILETRTRFCNDDTKKEYVPKMYDPLLNGLYRGTIKKGVSSSIINNTLLENWEKRVRLNRIHTIFLPNIDYQEFEQKAYTIDKKPLSTEIDEFLTLINELGNEAKSSLNLKGLSLFSDQEQRRANSEKRTKFVKFVFNALDPNETKSGKKSIGIKEISKKVPRWSHKLITELDQQMGEFKDRASMDHQLRSRKAKRVVIFTDNKATKDAEEEVALISYSQQSDFRRGIITGSMRAQRRKTFISKLFQANVHSPLFVDRITPLRLFSFDISELIKPILKNWTDKEGEFKILESREEQTKREEKKEKDKKEDNKRKEQARIAIEEAWDTIPLAQIIRGYMLITQSILRKYILLPALIIAKNIGRMLFLQLPEWSEDLQEWNREMQIKCTYNGVQLSETEFPKNWLRDGIQIKILFPFCLKPWHISKLYPSRRELMKKQKQKDDFCFLTVWGMEAELPFGSPRKRPSFFEPIFKELEKKIGKFKKKYFLTLKILKGKTKLFRKVSKETTKLFIKSIGFLKKIKKELSKVNLIVLFRFKEISESNETKKEKDYLISNQIINESFRQIESGNWPNSSLIETKMKDLTNRTSTIKNKIERITKEKKKVTPEIDINPNKTNNIKKFESPKKIFQILKSRNTRVIWKFHYFLKLFIQRLYINLFLSIINIPRITTQLFLKSTNKLIEKFISNNEINQEKINNQKKIHFMFISTIKKSLYNISKKNSHILCDLSYLSQAYVFYKLSQTQVINFSKFRSVLQYNTTSCFLKTKIKDYFKTLGIFHSELKHKKLQSYRINQWKNWLRWHYQYDLSQIRWSRLMPKKWRTRVNQSCMAQNKNRNLNKWNSYEKDQLLHYKKENDSELYSLSNEKDNFKKCYGYGLLAYKSINYENKSDSFFSRLPFEVQVKKNLEISYNSNTSKHNFVDMPGNLHINNYLRKGNILDRERNLDRKYFDWKIIHFSLRQKGDIEAWVKIDTNSNPNTKIGINNYQIIDKIEKKGVFYLTTHQNPEKTQKNSKKFFFDWMGMNEKIFNRPILNLEFWFFPEFVLLYNVYKIKPWIIPSKFLLFNLNTNKNVSQNKNQNFFLPSNKKIKIKNRSQEAKEPPSQRERGSDIENKGNLSPVFSKHQTDLEKDYVESDTKKGKNKKQYKSNTEAELDLFLKRYLLFQLRWNGALNQRMFENIKVYCLLLRLINPTKITISSIQRREMSLDIMLIQANLPLTDLMKKGVLIIEPIRLSVKDNGQFIMYQTIGISLIHKSKHQTNQRYREQRYVDKKNFDEFILQPQTQRINTEKTHFGLLVPENILWSRRRRELRIRSFFNSWNWNVVDRNSVFCNETNVKNWSQFLGERKPLYKDKNELIKFKFFFWPNYRLEDLACMNRYWFDTNNGSRFSILRIHMYPRLKIN</sequence>
<proteinExistence type="inferred from homology"/>
<feature type="chain" id="PRO_0000262630" description="Protein TIC 214">
    <location>
        <begin position="1"/>
        <end position="1891"/>
    </location>
</feature>
<feature type="transmembrane region" description="Helical" evidence="2">
    <location>
        <begin position="18"/>
        <end position="38"/>
    </location>
</feature>
<feature type="transmembrane region" description="Helical" evidence="2">
    <location>
        <begin position="64"/>
        <end position="84"/>
    </location>
</feature>
<feature type="transmembrane region" description="Helical" evidence="2">
    <location>
        <begin position="87"/>
        <end position="107"/>
    </location>
</feature>
<feature type="transmembrane region" description="Helical" evidence="2">
    <location>
        <begin position="124"/>
        <end position="144"/>
    </location>
</feature>
<feature type="transmembrane region" description="Helical" evidence="2">
    <location>
        <begin position="172"/>
        <end position="192"/>
    </location>
</feature>
<feature type="transmembrane region" description="Helical" evidence="2">
    <location>
        <begin position="221"/>
        <end position="241"/>
    </location>
</feature>
<feature type="region of interest" description="Disordered" evidence="3">
    <location>
        <begin position="248"/>
        <end position="300"/>
    </location>
</feature>
<feature type="region of interest" description="Disordered" evidence="3">
    <location>
        <begin position="788"/>
        <end position="807"/>
    </location>
</feature>
<feature type="region of interest" description="Disordered" evidence="3">
    <location>
        <begin position="1580"/>
        <end position="1607"/>
    </location>
</feature>
<feature type="compositionally biased region" description="Acidic residues" evidence="3">
    <location>
        <begin position="256"/>
        <end position="268"/>
    </location>
</feature>
<feature type="compositionally biased region" description="Basic and acidic residues" evidence="3">
    <location>
        <begin position="1582"/>
        <end position="1601"/>
    </location>
</feature>
<feature type="sequence conflict" description="In Ref. 2; CAJ32441." evidence="4" ref="2">
    <original>QDLFWF</original>
    <variation>FLIQKV</variation>
    <location>
        <begin position="374"/>
        <end position="379"/>
    </location>
</feature>
<feature type="sequence conflict" description="In Ref. 2; CAJ32453." evidence="4" ref="2">
    <original>Q</original>
    <variation>K</variation>
    <location>
        <position position="1189"/>
    </location>
</feature>
<geneLocation type="chloroplast"/>